<feature type="chain" id="PRO_0000194040" description="DNA polymerase alpha subunit B">
    <location>
        <begin position="1"/>
        <end position="574"/>
    </location>
</feature>
<feature type="mutagenesis site" description="Loss of interaction with orc2; when associated with H-527." evidence="4">
    <original>F</original>
    <variation>L</variation>
    <location>
        <position position="450"/>
    </location>
</feature>
<feature type="mutagenesis site" description="Loss of interaction with orc2; when associated with L-450." evidence="4">
    <original>N</original>
    <variation>H</variation>
    <location>
        <position position="527"/>
    </location>
</feature>
<dbReference type="EMBL" id="CU329672">
    <property type="protein sequence ID" value="CAA19261.1"/>
    <property type="molecule type" value="Genomic_DNA"/>
</dbReference>
<dbReference type="PIR" id="T41395">
    <property type="entry name" value="T41395"/>
</dbReference>
<dbReference type="RefSeq" id="NP_587765.1">
    <property type="nucleotide sequence ID" value="NM_001022758.2"/>
</dbReference>
<dbReference type="SMR" id="O74946"/>
<dbReference type="BioGRID" id="275707">
    <property type="interactions" value="8"/>
</dbReference>
<dbReference type="ComplexPortal" id="CPX-2092">
    <property type="entry name" value="DNA polymerase alpha:primase complex"/>
</dbReference>
<dbReference type="FunCoup" id="O74946">
    <property type="interactions" value="191"/>
</dbReference>
<dbReference type="IntAct" id="O74946">
    <property type="interactions" value="3"/>
</dbReference>
<dbReference type="STRING" id="284812.O74946"/>
<dbReference type="PaxDb" id="4896-SPCC553.09c.1"/>
<dbReference type="EnsemblFungi" id="SPCC553.09c.1">
    <property type="protein sequence ID" value="SPCC553.09c.1:pep"/>
    <property type="gene ID" value="SPCC553.09c"/>
</dbReference>
<dbReference type="GeneID" id="2539135"/>
<dbReference type="KEGG" id="spo:2539135"/>
<dbReference type="PomBase" id="SPCC553.09c">
    <property type="gene designation" value="spb70"/>
</dbReference>
<dbReference type="VEuPathDB" id="FungiDB:SPCC553.09c"/>
<dbReference type="eggNOG" id="KOG1625">
    <property type="taxonomic scope" value="Eukaryota"/>
</dbReference>
<dbReference type="HOGENOM" id="CLU_014923_1_0_1"/>
<dbReference type="InParanoid" id="O74946"/>
<dbReference type="OMA" id="PFLDIEH"/>
<dbReference type="PhylomeDB" id="O74946"/>
<dbReference type="Reactome" id="R-SPO-113501">
    <property type="pathway name" value="Inhibition of replication initiation of damaged DNA by RB1/E2F1"/>
</dbReference>
<dbReference type="Reactome" id="R-SPO-68952">
    <property type="pathway name" value="DNA replication initiation"/>
</dbReference>
<dbReference type="Reactome" id="R-SPO-68962">
    <property type="pathway name" value="Activation of the pre-replicative complex"/>
</dbReference>
<dbReference type="Reactome" id="R-SPO-69091">
    <property type="pathway name" value="Polymerase switching"/>
</dbReference>
<dbReference type="Reactome" id="R-SPO-69166">
    <property type="pathway name" value="Removal of the Flap Intermediate"/>
</dbReference>
<dbReference type="Reactome" id="R-SPO-69183">
    <property type="pathway name" value="Processive synthesis on the lagging strand"/>
</dbReference>
<dbReference type="PRO" id="PR:O74946"/>
<dbReference type="Proteomes" id="UP000002485">
    <property type="component" value="Chromosome III"/>
</dbReference>
<dbReference type="GO" id="GO:0005658">
    <property type="term" value="C:alpha DNA polymerase:primase complex"/>
    <property type="evidence" value="ECO:0000353"/>
    <property type="project" value="ComplexPortal"/>
</dbReference>
<dbReference type="GO" id="GO:0000785">
    <property type="term" value="C:chromatin"/>
    <property type="evidence" value="ECO:0000305"/>
    <property type="project" value="PomBase"/>
</dbReference>
<dbReference type="GO" id="GO:0005829">
    <property type="term" value="C:cytosol"/>
    <property type="evidence" value="ECO:0007005"/>
    <property type="project" value="PomBase"/>
</dbReference>
<dbReference type="GO" id="GO:0005634">
    <property type="term" value="C:nucleus"/>
    <property type="evidence" value="ECO:0007005"/>
    <property type="project" value="PomBase"/>
</dbReference>
<dbReference type="GO" id="GO:0003677">
    <property type="term" value="F:DNA binding"/>
    <property type="evidence" value="ECO:0007669"/>
    <property type="project" value="InterPro"/>
</dbReference>
<dbReference type="GO" id="GO:0006270">
    <property type="term" value="P:DNA replication initiation"/>
    <property type="evidence" value="ECO:0000314"/>
    <property type="project" value="ComplexPortal"/>
</dbReference>
<dbReference type="GO" id="GO:0006269">
    <property type="term" value="P:DNA replication, synthesis of primer"/>
    <property type="evidence" value="ECO:0000305"/>
    <property type="project" value="PomBase"/>
</dbReference>
<dbReference type="GO" id="GO:1902975">
    <property type="term" value="P:mitotic DNA replication initiation"/>
    <property type="evidence" value="ECO:0000305"/>
    <property type="project" value="PomBase"/>
</dbReference>
<dbReference type="Gene3D" id="3.60.21.60">
    <property type="match status" value="2"/>
</dbReference>
<dbReference type="InterPro" id="IPR007185">
    <property type="entry name" value="DNA_pol_a/d/e_bsu"/>
</dbReference>
<dbReference type="InterPro" id="IPR016722">
    <property type="entry name" value="DNA_pol_alpha_bsu"/>
</dbReference>
<dbReference type="InterPro" id="IPR054300">
    <property type="entry name" value="DPOA2_OB"/>
</dbReference>
<dbReference type="PANTHER" id="PTHR23061">
    <property type="entry name" value="DNA POLYMERASE 2 ALPHA 70 KDA SUBUNIT"/>
    <property type="match status" value="1"/>
</dbReference>
<dbReference type="PANTHER" id="PTHR23061:SF12">
    <property type="entry name" value="DNA POLYMERASE ALPHA SUBUNIT B"/>
    <property type="match status" value="1"/>
</dbReference>
<dbReference type="Pfam" id="PF04042">
    <property type="entry name" value="DNA_pol_E_B"/>
    <property type="match status" value="1"/>
</dbReference>
<dbReference type="Pfam" id="PF22062">
    <property type="entry name" value="DPOA2_OB"/>
    <property type="match status" value="1"/>
</dbReference>
<dbReference type="PIRSF" id="PIRSF018300">
    <property type="entry name" value="DNA_pol_alph_2"/>
    <property type="match status" value="1"/>
</dbReference>
<comment type="function">
    <text evidence="2 3 4">Accessory subunit of the DNA polymerase alpha complex (also known as the alpha DNA polymerase-primase complex) which plays an essential role in the initiation of DNA synthesis (PubMed:15314153). During the S phase of the cell cycle, the DNA polymerase alpha complex (composed of a catalytic subunit pol1, an accessory subunit spb70/pol12 and two primase subunits, the catalytic subunit spp1/pri1 and the regulatory subunit spp2/pri2) is recruited to DNA at the replicative forks (By similarity). The primase subunit of the polymerase alpha complex initiates DNA synthesis by oligomerising short RNA primers on both leading and lagging strands (By similarity).</text>
</comment>
<comment type="subunit">
    <text evidence="4">Component of the alpha DNA polymerase complex (also known as the alpha DNA polymerase-primase complex) consisting of four subunits: the catalytic subunit pol1, the accessory subunit spb70/pol12, and the primase complex subunits spp1/pri1 and spp2/pri2 respectively (PubMed:15314153). Interacts with orc1 (PubMed:15314153). Interacts with orc2; the interaction occurs on the chromatin, is stable thoughout the cell cycle and is independent from spb70 role in the alpha DNA polymerase complex (PubMed:15314153).</text>
</comment>
<comment type="interaction">
    <interactant intactId="EBI-849056">
        <id>O74946</id>
    </interactant>
    <interactant intactId="EBI-455823">
        <id>P28040</id>
        <label>pol1</label>
    </interactant>
    <organismsDiffer>false</organismsDiffer>
    <experiments>2</experiments>
</comment>
<comment type="subcellular location">
    <subcellularLocation>
        <location evidence="4">Nucleus</location>
    </subcellularLocation>
    <subcellularLocation>
        <location evidence="4">Chromosome</location>
    </subcellularLocation>
    <text evidence="4">Present both in soluble and chromatin-bound form.</text>
</comment>
<comment type="PTM">
    <text evidence="1">Phosphorylated in a cell cycle-dependent manner.</text>
</comment>
<comment type="similarity">
    <text evidence="6">Belongs to the DNA polymerase alpha subunit B family.</text>
</comment>
<name>DPOA2_SCHPO</name>
<proteinExistence type="evidence at protein level"/>
<evidence type="ECO:0000250" key="1"/>
<evidence type="ECO:0000250" key="2">
    <source>
        <dbReference type="UniProtKB" id="P09884"/>
    </source>
</evidence>
<evidence type="ECO:0000250" key="3">
    <source>
        <dbReference type="UniProtKB" id="P20664"/>
    </source>
</evidence>
<evidence type="ECO:0000269" key="4">
    <source>
    </source>
</evidence>
<evidence type="ECO:0000303" key="5">
    <source>
    </source>
</evidence>
<evidence type="ECO:0000305" key="6"/>
<evidence type="ECO:0000312" key="7">
    <source>
        <dbReference type="PomBase" id="SPCC553.09c"/>
    </source>
</evidence>
<sequence>MEFPIDDEELLDERNKLLQICNMDEQTMFYKWESWCLQRGNTPKLDLDTFKAFAKDMKFQMERQVKATLKQNPERKSIKQIPGMNIDSILGLPVKTTASGDSLMQESKPSTETFELNSSDAGRVLEVLNKELKIVTSKPSAPSKLVIVANFDLKAFNYRIMYQKLYDSSEVLDDRIELFSALTCRKYNISDEDLANPSELTQEPVVVVGRIVVESTNLGGRLNQNSILLESSRRLGAGVRVRLKVDDLPSYSIFPGQIVSVKGSNPSGNMFIAKEILPIPPLPFPSSSKQEHATFVANTNNQPISIYIASGPWSLRDDLSFSPLKSMISYVNKNPVDLVILCGPFLDINHILIRTGNITGTSATSLEELFKERVTPILSQLTCPCILIPHINDAASDHPAWPQDAFNRVALGLPSNFKCFPNPCMFSINDVVFGVSTNDILLHTSREELFRLPSHGNLFARLVSHVLHQRHFYPLFPGGSLEKCNPSNLDIAHLKLGEFLNTMPDILILPSDLRYFVKNVENVVSLNPGKATKGINLGTFAKLTIAPLELGDNGSSNHYSHRVWLRTKAEILKL</sequence>
<keyword id="KW-0158">Chromosome</keyword>
<keyword id="KW-0235">DNA replication</keyword>
<keyword id="KW-0539">Nucleus</keyword>
<keyword id="KW-0597">Phosphoprotein</keyword>
<keyword id="KW-1185">Reference proteome</keyword>
<gene>
    <name evidence="5 7" type="primary">spb70</name>
    <name evidence="7" type="synonym">pol12</name>
    <name type="ORF">SPCC553.09c</name>
</gene>
<protein>
    <recommendedName>
        <fullName>DNA polymerase alpha subunit B</fullName>
    </recommendedName>
</protein>
<organism>
    <name type="scientific">Schizosaccharomyces pombe (strain 972 / ATCC 24843)</name>
    <name type="common">Fission yeast</name>
    <dbReference type="NCBI Taxonomy" id="284812"/>
    <lineage>
        <taxon>Eukaryota</taxon>
        <taxon>Fungi</taxon>
        <taxon>Dikarya</taxon>
        <taxon>Ascomycota</taxon>
        <taxon>Taphrinomycotina</taxon>
        <taxon>Schizosaccharomycetes</taxon>
        <taxon>Schizosaccharomycetales</taxon>
        <taxon>Schizosaccharomycetaceae</taxon>
        <taxon>Schizosaccharomyces</taxon>
    </lineage>
</organism>
<reference key="1">
    <citation type="journal article" date="2002" name="Nature">
        <title>The genome sequence of Schizosaccharomyces pombe.</title>
        <authorList>
            <person name="Wood V."/>
            <person name="Gwilliam R."/>
            <person name="Rajandream M.A."/>
            <person name="Lyne M.H."/>
            <person name="Lyne R."/>
            <person name="Stewart A."/>
            <person name="Sgouros J.G."/>
            <person name="Peat N."/>
            <person name="Hayles J."/>
            <person name="Baker S.G."/>
            <person name="Basham D."/>
            <person name="Bowman S."/>
            <person name="Brooks K."/>
            <person name="Brown D."/>
            <person name="Brown S."/>
            <person name="Chillingworth T."/>
            <person name="Churcher C.M."/>
            <person name="Collins M."/>
            <person name="Connor R."/>
            <person name="Cronin A."/>
            <person name="Davis P."/>
            <person name="Feltwell T."/>
            <person name="Fraser A."/>
            <person name="Gentles S."/>
            <person name="Goble A."/>
            <person name="Hamlin N."/>
            <person name="Harris D.E."/>
            <person name="Hidalgo J."/>
            <person name="Hodgson G."/>
            <person name="Holroyd S."/>
            <person name="Hornsby T."/>
            <person name="Howarth S."/>
            <person name="Huckle E.J."/>
            <person name="Hunt S."/>
            <person name="Jagels K."/>
            <person name="James K.D."/>
            <person name="Jones L."/>
            <person name="Jones M."/>
            <person name="Leather S."/>
            <person name="McDonald S."/>
            <person name="McLean J."/>
            <person name="Mooney P."/>
            <person name="Moule S."/>
            <person name="Mungall K.L."/>
            <person name="Murphy L.D."/>
            <person name="Niblett D."/>
            <person name="Odell C."/>
            <person name="Oliver K."/>
            <person name="O'Neil S."/>
            <person name="Pearson D."/>
            <person name="Quail M.A."/>
            <person name="Rabbinowitsch E."/>
            <person name="Rutherford K.M."/>
            <person name="Rutter S."/>
            <person name="Saunders D."/>
            <person name="Seeger K."/>
            <person name="Sharp S."/>
            <person name="Skelton J."/>
            <person name="Simmonds M.N."/>
            <person name="Squares R."/>
            <person name="Squares S."/>
            <person name="Stevens K."/>
            <person name="Taylor K."/>
            <person name="Taylor R.G."/>
            <person name="Tivey A."/>
            <person name="Walsh S.V."/>
            <person name="Warren T."/>
            <person name="Whitehead S."/>
            <person name="Woodward J.R."/>
            <person name="Volckaert G."/>
            <person name="Aert R."/>
            <person name="Robben J."/>
            <person name="Grymonprez B."/>
            <person name="Weltjens I."/>
            <person name="Vanstreels E."/>
            <person name="Rieger M."/>
            <person name="Schaefer M."/>
            <person name="Mueller-Auer S."/>
            <person name="Gabel C."/>
            <person name="Fuchs M."/>
            <person name="Duesterhoeft A."/>
            <person name="Fritzc C."/>
            <person name="Holzer E."/>
            <person name="Moestl D."/>
            <person name="Hilbert H."/>
            <person name="Borzym K."/>
            <person name="Langer I."/>
            <person name="Beck A."/>
            <person name="Lehrach H."/>
            <person name="Reinhardt R."/>
            <person name="Pohl T.M."/>
            <person name="Eger P."/>
            <person name="Zimmermann W."/>
            <person name="Wedler H."/>
            <person name="Wambutt R."/>
            <person name="Purnelle B."/>
            <person name="Goffeau A."/>
            <person name="Cadieu E."/>
            <person name="Dreano S."/>
            <person name="Gloux S."/>
            <person name="Lelaure V."/>
            <person name="Mottier S."/>
            <person name="Galibert F."/>
            <person name="Aves S.J."/>
            <person name="Xiang Z."/>
            <person name="Hunt C."/>
            <person name="Moore K."/>
            <person name="Hurst S.M."/>
            <person name="Lucas M."/>
            <person name="Rochet M."/>
            <person name="Gaillardin C."/>
            <person name="Tallada V.A."/>
            <person name="Garzon A."/>
            <person name="Thode G."/>
            <person name="Daga R.R."/>
            <person name="Cruzado L."/>
            <person name="Jimenez J."/>
            <person name="Sanchez M."/>
            <person name="del Rey F."/>
            <person name="Benito J."/>
            <person name="Dominguez A."/>
            <person name="Revuelta J.L."/>
            <person name="Moreno S."/>
            <person name="Armstrong J."/>
            <person name="Forsburg S.L."/>
            <person name="Cerutti L."/>
            <person name="Lowe T."/>
            <person name="McCombie W.R."/>
            <person name="Paulsen I."/>
            <person name="Potashkin J."/>
            <person name="Shpakovski G.V."/>
            <person name="Ussery D."/>
            <person name="Barrell B.G."/>
            <person name="Nurse P."/>
        </authorList>
    </citation>
    <scope>NUCLEOTIDE SEQUENCE [LARGE SCALE GENOMIC DNA]</scope>
    <source>
        <strain>972 / ATCC 24843</strain>
    </source>
</reference>
<reference key="2">
    <citation type="journal article" date="2004" name="Mol. Cell. Biol.">
        <title>The B-subunit of DNA polymerase alpha-primase associates with the origin recognition complex for initiation of DNA replication.</title>
        <authorList>
            <person name="Uchiyama M."/>
            <person name="Wang T.S."/>
        </authorList>
    </citation>
    <scope>FUNCTION</scope>
    <scope>IDENTIFICATION IN THE DNA POLYMERASE ALPHA COMPLEX</scope>
    <scope>INTERACTION WITH ORC1 AND ORC2</scope>
    <scope>SUBCELLULAR LOCATION</scope>
    <scope>MUTAGENESIS OF PHE-450 AND ASN-527</scope>
</reference>
<accession>O74946</accession>